<feature type="signal peptide" evidence="3">
    <location>
        <begin position="1"/>
        <end position="33"/>
    </location>
</feature>
<feature type="chain" id="PRO_0000249005" description="Probable alpha-glucosidase Os06g0675700">
    <location>
        <begin position="34"/>
        <end position="885"/>
    </location>
</feature>
<feature type="active site" evidence="1">
    <location>
        <position position="443"/>
    </location>
</feature>
<feature type="active site" evidence="1">
    <location>
        <position position="446"/>
    </location>
</feature>
<feature type="active site" description="Proton donor" evidence="1">
    <location>
        <position position="540"/>
    </location>
</feature>
<feature type="glycosylation site" description="N-linked (GlcNAc...) asparagine" evidence="2">
    <location>
        <position position="195"/>
    </location>
</feature>
<feature type="glycosylation site" description="N-linked (GlcNAc...) asparagine" evidence="2">
    <location>
        <position position="378"/>
    </location>
</feature>
<feature type="glycosylation site" description="N-linked (GlcNAc...) asparagine" evidence="2">
    <location>
        <position position="397"/>
    </location>
</feature>
<feature type="glycosylation site" description="N-linked (GlcNAc...) asparagine" evidence="2">
    <location>
        <position position="467"/>
    </location>
</feature>
<feature type="glycosylation site" description="N-linked (GlcNAc...) asparagine" evidence="2">
    <location>
        <position position="477"/>
    </location>
</feature>
<feature type="glycosylation site" description="N-linked (GlcNAc...) asparagine" evidence="2">
    <location>
        <position position="576"/>
    </location>
</feature>
<feature type="glycosylation site" description="N-linked (GlcNAc...) asparagine" evidence="2">
    <location>
        <position position="844"/>
    </location>
</feature>
<feature type="sequence conflict" description="In Ref. 6; AA sequence." evidence="4" ref="6">
    <original>G</original>
    <variation>S</variation>
    <location>
        <position position="34"/>
    </location>
</feature>
<feature type="sequence conflict" description="In Ref. 6; AA sequence." evidence="4" ref="6">
    <original>S</original>
    <variation>L</variation>
    <location>
        <position position="43"/>
    </location>
</feature>
<feature type="sequence conflict" description="In Ref. 5; AK119824." evidence="4" ref="5">
    <original>A</original>
    <variation>P</variation>
    <location>
        <position position="177"/>
    </location>
</feature>
<feature type="sequence conflict" description="In Ref. 5; AK119824." evidence="4" ref="5">
    <original>N</original>
    <variation>S</variation>
    <location>
        <position position="445"/>
    </location>
</feature>
<keyword id="KW-0903">Direct protein sequencing</keyword>
<keyword id="KW-0325">Glycoprotein</keyword>
<keyword id="KW-0326">Glycosidase</keyword>
<keyword id="KW-0378">Hydrolase</keyword>
<keyword id="KW-1185">Reference proteome</keyword>
<keyword id="KW-0732">Signal</keyword>
<gene>
    <name type="ordered locus">Os06g0675700</name>
    <name type="ordered locus">LOC_Os06g46284</name>
    <name type="ORF">B1153E06.2</name>
    <name evidence="6" type="ORF">OsJ_22347</name>
</gene>
<sequence length="885" mass="96336">MMGSPPAPPARRLGALAVFLLALFLAAPWGVDCGYNVASVAGSKNRLRARLELAGGGGGAAPELGPDVRRLSLTASLETDSRLHVRITDADHPRWEVPQDVIPRPSPDSFLAATRPGGGRVLSTATSDLTFAIHTSPFRFTVTRRSTGDVLFDTTPNLVFKDRYLELTSSLPPPGRASLYGLGEQTKRTFRLQRNDTFTLWNSDIAAGNVDLNLYGSHPFYMDVRSGGGGGGGAAHGVLLLNSNGMDVIYGGSYVTYKVIGGVLDFYFFAGPSPLAVVDQYTQLIGRPAPMPYWSFGFHQCRYGYKNVADLEGVVAGYAKARIPLEVMWTDIDYMDAYKDFTLDPVNFPADRMRPFVDRLHRNGQKFVVIIDPGINVNTTYGTFVRGMKQDIFLKWNGSNYLGVVWPGNVYFPDFLNPRAAEFWAREIAAFRRTLPVDGLWVDMNEISNFVDPPPLNAIDDPPYRINNSGVRRPINNKTVPASAVHYGGVAEYDAHNLFGFLEARATHDALLRDTGRRPFVLSRSTFVGSGRYTAHWTGDNAATWEDLHYSINTMLSFGLFGIPMIGADICGFGGNTTEELCSRWIQLGAFYPFSRDHSAIGTVRRELYLWESVARSARKALGLRYRLLPYLYTLMYEAHTTGAPIARPLFFSYPGDVETYGIDRQFLLGRGVLVSPVLEPGATTVTAYFPAGRWFSLYDFSLAVATKTGKRVTLPAPADTVNVHVAGGNILTLQQPALTSSRVRQSVVHLLVALADDGTATGDLFLDDGESPEMAGPRSRWSQIKFSGATESGGGVVRVRSHVVHDSYAPSRTMAIGKVVLMGLRSAAPPKGFAVYANGVQVNASTAVGGAAGSPEKGALGVAHVSGLTLVVGQEFDLKVVMTY</sequence>
<reference key="1">
    <citation type="journal article" date="2005" name="Nature">
        <title>The map-based sequence of the rice genome.</title>
        <authorList>
            <consortium name="International rice genome sequencing project (IRGSP)"/>
        </authorList>
    </citation>
    <scope>NUCLEOTIDE SEQUENCE [LARGE SCALE GENOMIC DNA]</scope>
    <source>
        <strain>cv. Nipponbare</strain>
    </source>
</reference>
<reference key="2">
    <citation type="journal article" date="2008" name="Nucleic Acids Res.">
        <title>The rice annotation project database (RAP-DB): 2008 update.</title>
        <authorList>
            <consortium name="The rice annotation project (RAP)"/>
        </authorList>
    </citation>
    <scope>GENOME REANNOTATION</scope>
    <source>
        <strain>cv. Nipponbare</strain>
    </source>
</reference>
<reference key="3">
    <citation type="journal article" date="2013" name="Rice">
        <title>Improvement of the Oryza sativa Nipponbare reference genome using next generation sequence and optical map data.</title>
        <authorList>
            <person name="Kawahara Y."/>
            <person name="de la Bastide M."/>
            <person name="Hamilton J.P."/>
            <person name="Kanamori H."/>
            <person name="McCombie W.R."/>
            <person name="Ouyang S."/>
            <person name="Schwartz D.C."/>
            <person name="Tanaka T."/>
            <person name="Wu J."/>
            <person name="Zhou S."/>
            <person name="Childs K.L."/>
            <person name="Davidson R.M."/>
            <person name="Lin H."/>
            <person name="Quesada-Ocampo L."/>
            <person name="Vaillancourt B."/>
            <person name="Sakai H."/>
            <person name="Lee S.S."/>
            <person name="Kim J."/>
            <person name="Numa H."/>
            <person name="Itoh T."/>
            <person name="Buell C.R."/>
            <person name="Matsumoto T."/>
        </authorList>
    </citation>
    <scope>GENOME REANNOTATION</scope>
    <source>
        <strain>cv. Nipponbare</strain>
    </source>
</reference>
<reference key="4">
    <citation type="journal article" date="2005" name="PLoS Biol.">
        <title>The genomes of Oryza sativa: a history of duplications.</title>
        <authorList>
            <person name="Yu J."/>
            <person name="Wang J."/>
            <person name="Lin W."/>
            <person name="Li S."/>
            <person name="Li H."/>
            <person name="Zhou J."/>
            <person name="Ni P."/>
            <person name="Dong W."/>
            <person name="Hu S."/>
            <person name="Zeng C."/>
            <person name="Zhang J."/>
            <person name="Zhang Y."/>
            <person name="Li R."/>
            <person name="Xu Z."/>
            <person name="Li S."/>
            <person name="Li X."/>
            <person name="Zheng H."/>
            <person name="Cong L."/>
            <person name="Lin L."/>
            <person name="Yin J."/>
            <person name="Geng J."/>
            <person name="Li G."/>
            <person name="Shi J."/>
            <person name="Liu J."/>
            <person name="Lv H."/>
            <person name="Li J."/>
            <person name="Wang J."/>
            <person name="Deng Y."/>
            <person name="Ran L."/>
            <person name="Shi X."/>
            <person name="Wang X."/>
            <person name="Wu Q."/>
            <person name="Li C."/>
            <person name="Ren X."/>
            <person name="Wang J."/>
            <person name="Wang X."/>
            <person name="Li D."/>
            <person name="Liu D."/>
            <person name="Zhang X."/>
            <person name="Ji Z."/>
            <person name="Zhao W."/>
            <person name="Sun Y."/>
            <person name="Zhang Z."/>
            <person name="Bao J."/>
            <person name="Han Y."/>
            <person name="Dong L."/>
            <person name="Ji J."/>
            <person name="Chen P."/>
            <person name="Wu S."/>
            <person name="Liu J."/>
            <person name="Xiao Y."/>
            <person name="Bu D."/>
            <person name="Tan J."/>
            <person name="Yang L."/>
            <person name="Ye C."/>
            <person name="Zhang J."/>
            <person name="Xu J."/>
            <person name="Zhou Y."/>
            <person name="Yu Y."/>
            <person name="Zhang B."/>
            <person name="Zhuang S."/>
            <person name="Wei H."/>
            <person name="Liu B."/>
            <person name="Lei M."/>
            <person name="Yu H."/>
            <person name="Li Y."/>
            <person name="Xu H."/>
            <person name="Wei S."/>
            <person name="He X."/>
            <person name="Fang L."/>
            <person name="Zhang Z."/>
            <person name="Zhang Y."/>
            <person name="Huang X."/>
            <person name="Su Z."/>
            <person name="Tong W."/>
            <person name="Li J."/>
            <person name="Tong Z."/>
            <person name="Li S."/>
            <person name="Ye J."/>
            <person name="Wang L."/>
            <person name="Fang L."/>
            <person name="Lei T."/>
            <person name="Chen C.-S."/>
            <person name="Chen H.-C."/>
            <person name="Xu Z."/>
            <person name="Li H."/>
            <person name="Huang H."/>
            <person name="Zhang F."/>
            <person name="Xu H."/>
            <person name="Li N."/>
            <person name="Zhao C."/>
            <person name="Li S."/>
            <person name="Dong L."/>
            <person name="Huang Y."/>
            <person name="Li L."/>
            <person name="Xi Y."/>
            <person name="Qi Q."/>
            <person name="Li W."/>
            <person name="Zhang B."/>
            <person name="Hu W."/>
            <person name="Zhang Y."/>
            <person name="Tian X."/>
            <person name="Jiao Y."/>
            <person name="Liang X."/>
            <person name="Jin J."/>
            <person name="Gao L."/>
            <person name="Zheng W."/>
            <person name="Hao B."/>
            <person name="Liu S.-M."/>
            <person name="Wang W."/>
            <person name="Yuan L."/>
            <person name="Cao M."/>
            <person name="McDermott J."/>
            <person name="Samudrala R."/>
            <person name="Wang J."/>
            <person name="Wong G.K.-S."/>
            <person name="Yang H."/>
        </authorList>
    </citation>
    <scope>NUCLEOTIDE SEQUENCE [LARGE SCALE GENOMIC DNA]</scope>
    <source>
        <strain>cv. Nipponbare</strain>
    </source>
</reference>
<reference key="5">
    <citation type="journal article" date="2003" name="Science">
        <title>Collection, mapping, and annotation of over 28,000 cDNA clones from japonica rice.</title>
        <authorList>
            <consortium name="The rice full-length cDNA consortium"/>
        </authorList>
    </citation>
    <scope>NUCLEOTIDE SEQUENCE [LARGE SCALE MRNA]</scope>
    <source>
        <strain>cv. Nipponbare</strain>
    </source>
</reference>
<reference key="6">
    <citation type="journal article" date="2000" name="J. Biol. Chem.">
        <title>Developmentally regulated expression of a peptide:N-glycanase during germination of rice seeds (Oryza sativa) and its purification and characterization.</title>
        <authorList>
            <person name="Chang T."/>
            <person name="Kuo M.-C."/>
            <person name="Khoo K.-H."/>
            <person name="Inoue S."/>
            <person name="Inoue Y."/>
        </authorList>
    </citation>
    <scope>PROTEIN SEQUENCE OF 34-43</scope>
</reference>
<name>AGLU_ORYSJ</name>
<dbReference type="EC" id="3.2.1.20"/>
<dbReference type="EMBL" id="AP004989">
    <property type="protein sequence ID" value="BAD45910.1"/>
    <property type="molecule type" value="Genomic_DNA"/>
</dbReference>
<dbReference type="EMBL" id="AP008212">
    <property type="protein sequence ID" value="BAF20261.1"/>
    <property type="molecule type" value="Genomic_DNA"/>
</dbReference>
<dbReference type="EMBL" id="AP014962">
    <property type="protein sequence ID" value="BAS99103.1"/>
    <property type="molecule type" value="Genomic_DNA"/>
</dbReference>
<dbReference type="EMBL" id="CM000143">
    <property type="protein sequence ID" value="EEE66212.1"/>
    <property type="molecule type" value="Genomic_DNA"/>
</dbReference>
<dbReference type="EMBL" id="AK119824">
    <property type="status" value="NOT_ANNOTATED_CDS"/>
    <property type="molecule type" value="mRNA"/>
</dbReference>
<dbReference type="RefSeq" id="XP_015643120.1">
    <property type="nucleotide sequence ID" value="XM_015787634.1"/>
</dbReference>
<dbReference type="SMR" id="Q653V7"/>
<dbReference type="FunCoup" id="Q653V7">
    <property type="interactions" value="2684"/>
</dbReference>
<dbReference type="STRING" id="39947.Q653V7"/>
<dbReference type="BindingDB" id="Q653V7"/>
<dbReference type="ChEMBL" id="CHEMBL1163102"/>
<dbReference type="CAZy" id="GH31">
    <property type="family name" value="Glycoside Hydrolase Family 31"/>
</dbReference>
<dbReference type="PaxDb" id="39947-Q653V7"/>
<dbReference type="EnsemblPlants" id="Os06t0675700-01">
    <property type="protein sequence ID" value="Os06t0675700-01"/>
    <property type="gene ID" value="Os06g0675700"/>
</dbReference>
<dbReference type="Gramene" id="Os06t0675700-01">
    <property type="protein sequence ID" value="Os06t0675700-01"/>
    <property type="gene ID" value="Os06g0675700"/>
</dbReference>
<dbReference type="KEGG" id="dosa:Os06g0675700"/>
<dbReference type="eggNOG" id="KOG1065">
    <property type="taxonomic scope" value="Eukaryota"/>
</dbReference>
<dbReference type="HOGENOM" id="CLU_000631_11_1_1"/>
<dbReference type="InParanoid" id="Q653V7"/>
<dbReference type="OMA" id="NYTASPF"/>
<dbReference type="OrthoDB" id="5839090at2759"/>
<dbReference type="Proteomes" id="UP000000763">
    <property type="component" value="Chromosome 6"/>
</dbReference>
<dbReference type="Proteomes" id="UP000007752">
    <property type="component" value="Chromosome 6"/>
</dbReference>
<dbReference type="Proteomes" id="UP000059680">
    <property type="component" value="Chromosome 6"/>
</dbReference>
<dbReference type="GO" id="GO:0004558">
    <property type="term" value="F:alpha-1,4-glucosidase activity"/>
    <property type="evidence" value="ECO:0007669"/>
    <property type="project" value="UniProtKB-EC"/>
</dbReference>
<dbReference type="GO" id="GO:0030246">
    <property type="term" value="F:carbohydrate binding"/>
    <property type="evidence" value="ECO:0007669"/>
    <property type="project" value="InterPro"/>
</dbReference>
<dbReference type="GO" id="GO:0004553">
    <property type="term" value="F:hydrolase activity, hydrolyzing O-glycosyl compounds"/>
    <property type="evidence" value="ECO:0000318"/>
    <property type="project" value="GO_Central"/>
</dbReference>
<dbReference type="GO" id="GO:0000272">
    <property type="term" value="P:polysaccharide catabolic process"/>
    <property type="evidence" value="ECO:0007669"/>
    <property type="project" value="UniProtKB-ARBA"/>
</dbReference>
<dbReference type="CDD" id="cd06602">
    <property type="entry name" value="GH31_MGAM_SI_GAA"/>
    <property type="match status" value="1"/>
</dbReference>
<dbReference type="CDD" id="cd14752">
    <property type="entry name" value="GH31_N"/>
    <property type="match status" value="1"/>
</dbReference>
<dbReference type="FunFam" id="2.60.40.1180:FF:000044">
    <property type="entry name" value="Alpha-glucosidase 1"/>
    <property type="match status" value="1"/>
</dbReference>
<dbReference type="FunFam" id="3.20.20.80:FF:000016">
    <property type="entry name" value="Maltase-glucoamylase, intestinal"/>
    <property type="match status" value="1"/>
</dbReference>
<dbReference type="Gene3D" id="3.20.20.80">
    <property type="entry name" value="Glycosidases"/>
    <property type="match status" value="1"/>
</dbReference>
<dbReference type="Gene3D" id="2.60.40.1760">
    <property type="entry name" value="glycosyl hydrolase (family 31)"/>
    <property type="match status" value="1"/>
</dbReference>
<dbReference type="Gene3D" id="2.60.40.1180">
    <property type="entry name" value="Golgi alpha-mannosidase II"/>
    <property type="match status" value="2"/>
</dbReference>
<dbReference type="InterPro" id="IPR011013">
    <property type="entry name" value="Gal_mutarotase_sf_dom"/>
</dbReference>
<dbReference type="InterPro" id="IPR030458">
    <property type="entry name" value="Glyco_hydro_31_AS"/>
</dbReference>
<dbReference type="InterPro" id="IPR048395">
    <property type="entry name" value="Glyco_hydro_31_C"/>
</dbReference>
<dbReference type="InterPro" id="IPR030459">
    <property type="entry name" value="Glyco_hydro_31_CS"/>
</dbReference>
<dbReference type="InterPro" id="IPR025887">
    <property type="entry name" value="Glyco_hydro_31_N_dom"/>
</dbReference>
<dbReference type="InterPro" id="IPR000322">
    <property type="entry name" value="Glyco_hydro_31_TIM"/>
</dbReference>
<dbReference type="InterPro" id="IPR013780">
    <property type="entry name" value="Glyco_hydro_b"/>
</dbReference>
<dbReference type="InterPro" id="IPR017853">
    <property type="entry name" value="Glycoside_hydrolase_SF"/>
</dbReference>
<dbReference type="InterPro" id="IPR001763">
    <property type="entry name" value="Rhodanese-like_dom"/>
</dbReference>
<dbReference type="PANTHER" id="PTHR22762">
    <property type="entry name" value="ALPHA-GLUCOSIDASE"/>
    <property type="match status" value="1"/>
</dbReference>
<dbReference type="PANTHER" id="PTHR22762:SF133">
    <property type="entry name" value="P-TYPE DOMAIN-CONTAINING PROTEIN"/>
    <property type="match status" value="1"/>
</dbReference>
<dbReference type="Pfam" id="PF13802">
    <property type="entry name" value="Gal_mutarotas_2"/>
    <property type="match status" value="1"/>
</dbReference>
<dbReference type="Pfam" id="PF01055">
    <property type="entry name" value="Glyco_hydro_31_2nd"/>
    <property type="match status" value="1"/>
</dbReference>
<dbReference type="Pfam" id="PF21365">
    <property type="entry name" value="Glyco_hydro_31_3rd"/>
    <property type="match status" value="1"/>
</dbReference>
<dbReference type="SUPFAM" id="SSF51445">
    <property type="entry name" value="(Trans)glycosidases"/>
    <property type="match status" value="1"/>
</dbReference>
<dbReference type="SUPFAM" id="SSF74650">
    <property type="entry name" value="Galactose mutarotase-like"/>
    <property type="match status" value="1"/>
</dbReference>
<dbReference type="SUPFAM" id="SSF51011">
    <property type="entry name" value="Glycosyl hydrolase domain"/>
    <property type="match status" value="1"/>
</dbReference>
<dbReference type="PROSITE" id="PS00129">
    <property type="entry name" value="GLYCOSYL_HYDROL_F31_1"/>
    <property type="match status" value="1"/>
</dbReference>
<dbReference type="PROSITE" id="PS00707">
    <property type="entry name" value="GLYCOSYL_HYDROL_F31_2"/>
    <property type="match status" value="1"/>
</dbReference>
<comment type="catalytic activity">
    <reaction>
        <text>Hydrolysis of terminal, non-reducing (1-&gt;4)-linked alpha-D-glucose residues with release of alpha-D-glucose.</text>
        <dbReference type="EC" id="3.2.1.20"/>
    </reaction>
</comment>
<comment type="similarity">
    <text evidence="4">Belongs to the glycosyl hydrolase 31 family.</text>
</comment>
<comment type="caution">
    <text evidence="5">Was isolated and reported to have peptide:N-glycanase activity (PubMed:10617595). However, its strong sequence similarity with alpha-glucosidase proteins suggest that it is not its function in vivo.</text>
</comment>
<evidence type="ECO:0000250" key="1"/>
<evidence type="ECO:0000255" key="2"/>
<evidence type="ECO:0000269" key="3">
    <source>
    </source>
</evidence>
<evidence type="ECO:0000305" key="4"/>
<evidence type="ECO:0000305" key="5">
    <source>
    </source>
</evidence>
<evidence type="ECO:0000312" key="6">
    <source>
        <dbReference type="EMBL" id="EEE66212.1"/>
    </source>
</evidence>
<organism>
    <name type="scientific">Oryza sativa subsp. japonica</name>
    <name type="common">Rice</name>
    <dbReference type="NCBI Taxonomy" id="39947"/>
    <lineage>
        <taxon>Eukaryota</taxon>
        <taxon>Viridiplantae</taxon>
        <taxon>Streptophyta</taxon>
        <taxon>Embryophyta</taxon>
        <taxon>Tracheophyta</taxon>
        <taxon>Spermatophyta</taxon>
        <taxon>Magnoliopsida</taxon>
        <taxon>Liliopsida</taxon>
        <taxon>Poales</taxon>
        <taxon>Poaceae</taxon>
        <taxon>BOP clade</taxon>
        <taxon>Oryzoideae</taxon>
        <taxon>Oryzeae</taxon>
        <taxon>Oryzinae</taxon>
        <taxon>Oryza</taxon>
        <taxon>Oryza sativa</taxon>
    </lineage>
</organism>
<accession>Q653V7</accession>
<accession>Q0DA62</accession>
<proteinExistence type="evidence at protein level"/>
<protein>
    <recommendedName>
        <fullName>Probable alpha-glucosidase Os06g0675700</fullName>
        <ecNumber>3.2.1.20</ecNumber>
    </recommendedName>
    <alternativeName>
        <fullName>Maltase</fullName>
    </alternativeName>
</protein>